<keyword id="KW-0378">Hydrolase</keyword>
<keyword id="KW-0479">Metal-binding</keyword>
<keyword id="KW-1185">Reference proteome</keyword>
<keyword id="KW-0862">Zinc</keyword>
<feature type="chain" id="PRO_1000197953" description="D-aminoacyl-tRNA deacylase">
    <location>
        <begin position="1"/>
        <end position="493"/>
    </location>
</feature>
<feature type="region of interest" description="Disordered" evidence="2">
    <location>
        <begin position="22"/>
        <end position="44"/>
    </location>
</feature>
<feature type="region of interest" description="Disordered" evidence="2">
    <location>
        <begin position="441"/>
        <end position="493"/>
    </location>
</feature>
<feature type="compositionally biased region" description="Basic and acidic residues" evidence="2">
    <location>
        <begin position="22"/>
        <end position="37"/>
    </location>
</feature>
<organism>
    <name type="scientific">Halorubrum lacusprofundi (strain ATCC 49239 / DSM 5036 / JCM 8891 / ACAM 34)</name>
    <dbReference type="NCBI Taxonomy" id="416348"/>
    <lineage>
        <taxon>Archaea</taxon>
        <taxon>Methanobacteriati</taxon>
        <taxon>Methanobacteriota</taxon>
        <taxon>Stenosarchaea group</taxon>
        <taxon>Halobacteria</taxon>
        <taxon>Halobacteriales</taxon>
        <taxon>Haloferacaceae</taxon>
        <taxon>Halorubrum</taxon>
    </lineage>
</organism>
<dbReference type="EC" id="3.1.1.96" evidence="1"/>
<dbReference type="EMBL" id="CP001365">
    <property type="protein sequence ID" value="ACM56500.1"/>
    <property type="molecule type" value="Genomic_DNA"/>
</dbReference>
<dbReference type="RefSeq" id="WP_015909650.1">
    <property type="nucleotide sequence ID" value="NC_012029.1"/>
</dbReference>
<dbReference type="SMR" id="B9LV23"/>
<dbReference type="GeneID" id="7401273"/>
<dbReference type="KEGG" id="hla:Hlac_0902"/>
<dbReference type="eggNOG" id="arCOG00501">
    <property type="taxonomic scope" value="Archaea"/>
</dbReference>
<dbReference type="eggNOG" id="arCOG01616">
    <property type="taxonomic scope" value="Archaea"/>
</dbReference>
<dbReference type="HOGENOM" id="CLU_610619_0_0_2"/>
<dbReference type="Proteomes" id="UP000000740">
    <property type="component" value="Chromosome 1"/>
</dbReference>
<dbReference type="GO" id="GO:0051499">
    <property type="term" value="F:D-aminoacyl-tRNA deacylase activity"/>
    <property type="evidence" value="ECO:0007669"/>
    <property type="project" value="UniProtKB-UniRule"/>
</dbReference>
<dbReference type="GO" id="GO:0008270">
    <property type="term" value="F:zinc ion binding"/>
    <property type="evidence" value="ECO:0007669"/>
    <property type="project" value="UniProtKB-UniRule"/>
</dbReference>
<dbReference type="GO" id="GO:0019478">
    <property type="term" value="P:D-amino acid catabolic process"/>
    <property type="evidence" value="ECO:0007669"/>
    <property type="project" value="UniProtKB-UniRule"/>
</dbReference>
<dbReference type="Gene3D" id="3.40.50.10700">
    <property type="entry name" value="AF0625-like"/>
    <property type="match status" value="1"/>
</dbReference>
<dbReference type="Gene3D" id="3.40.630.50">
    <property type="entry name" value="AF0625-like"/>
    <property type="match status" value="1"/>
</dbReference>
<dbReference type="HAMAP" id="MF_00562">
    <property type="entry name" value="Deacylase_DtdA"/>
    <property type="match status" value="1"/>
</dbReference>
<dbReference type="InterPro" id="IPR018033">
    <property type="entry name" value="Deacylase_DtdA_archaea"/>
</dbReference>
<dbReference type="InterPro" id="IPR007508">
    <property type="entry name" value="DtdA"/>
</dbReference>
<dbReference type="NCBIfam" id="NF011435">
    <property type="entry name" value="PRK14866.1-1"/>
    <property type="match status" value="1"/>
</dbReference>
<dbReference type="PANTHER" id="PTHR34667">
    <property type="entry name" value="D-AMINOACYL-TRNA DEACYLASE"/>
    <property type="match status" value="1"/>
</dbReference>
<dbReference type="PANTHER" id="PTHR34667:SF1">
    <property type="entry name" value="D-AMINOACYL-TRNA DEACYLASE"/>
    <property type="match status" value="1"/>
</dbReference>
<dbReference type="Pfam" id="PF04414">
    <property type="entry name" value="tRNA_deacylase"/>
    <property type="match status" value="1"/>
</dbReference>
<dbReference type="SUPFAM" id="SSF142535">
    <property type="entry name" value="AF0625-like"/>
    <property type="match status" value="1"/>
</dbReference>
<comment type="function">
    <text evidence="1">D-aminoacyl-tRNA deacylase with broad substrate specificity. By recycling D-aminoacyl-tRNA to D-amino acids and free tRNA molecules, this enzyme counteracts the toxicity associated with the formation of D-aminoacyl-tRNA entities in vivo.</text>
</comment>
<comment type="catalytic activity">
    <reaction evidence="1">
        <text>a D-aminoacyl-tRNA + H2O = a tRNA + a D-alpha-amino acid + H(+)</text>
        <dbReference type="Rhea" id="RHEA:13953"/>
        <dbReference type="Rhea" id="RHEA-COMP:10123"/>
        <dbReference type="Rhea" id="RHEA-COMP:10124"/>
        <dbReference type="ChEBI" id="CHEBI:15377"/>
        <dbReference type="ChEBI" id="CHEBI:15378"/>
        <dbReference type="ChEBI" id="CHEBI:59871"/>
        <dbReference type="ChEBI" id="CHEBI:78442"/>
        <dbReference type="ChEBI" id="CHEBI:79333"/>
        <dbReference type="EC" id="3.1.1.96"/>
    </reaction>
</comment>
<comment type="catalytic activity">
    <reaction evidence="1">
        <text>glycyl-tRNA(Ala) + H2O = tRNA(Ala) + glycine + H(+)</text>
        <dbReference type="Rhea" id="RHEA:53744"/>
        <dbReference type="Rhea" id="RHEA-COMP:9657"/>
        <dbReference type="Rhea" id="RHEA-COMP:13640"/>
        <dbReference type="ChEBI" id="CHEBI:15377"/>
        <dbReference type="ChEBI" id="CHEBI:15378"/>
        <dbReference type="ChEBI" id="CHEBI:57305"/>
        <dbReference type="ChEBI" id="CHEBI:78442"/>
        <dbReference type="ChEBI" id="CHEBI:78522"/>
        <dbReference type="EC" id="3.1.1.96"/>
    </reaction>
</comment>
<comment type="cofactor">
    <cofactor evidence="1">
        <name>Zn(2+)</name>
        <dbReference type="ChEBI" id="CHEBI:29105"/>
    </cofactor>
    <text evidence="1">Binds 2 Zn(2+) ions per subunit.</text>
</comment>
<comment type="subunit">
    <text evidence="1">Monomer.</text>
</comment>
<comment type="similarity">
    <text evidence="1">Belongs to the DtdA deacylase family.</text>
</comment>
<gene>
    <name evidence="1" type="primary">dtdA</name>
    <name type="ordered locus">Hlac_0902</name>
</gene>
<proteinExistence type="inferred from homology"/>
<name>DTDA_HALLT</name>
<sequence length="493" mass="52128">MIAIVVSRADSASEHIGEHLLDLGDWERRDDPSRPDADGGGTYYRTDGFELREFDDLHIYLDDPAAAFGGGAGDETNDAASDDTDETPEFLAFVSRHSGETGELLTAHVTGNFGPAPYGGEPDTLARAAPGAEKRVVEALAAHAPEGYDVGIECTHHGPTDTSVPSLFVELGSDEPQWTDADAARAVARAVLDLRGTDADLVTDAGETTDEIDDDPHPRHVVGFGGGHYAPRFTRIVRETEWAVGHVGADWALGELGAPDANRDVIEQAFARSKANVAVIEGEKPDLEATVEALGHRVVSETWVRAVGDRPLPLVERLESDLATIDEGLRFGEVVPASPDAIRVRGLPEDLLSRAQGVDADAARVAVETNAVAFDTEQAGTRAAGSVAFADDEVSPGYDDLVADLAGVLERGYDTVDITDGAVIARETAFDPELAAKRGVPEGPAFGRLASGESVEVDGETIAPADVSRERTNRFPIDSPTDSAAEPPTEPSE</sequence>
<protein>
    <recommendedName>
        <fullName evidence="1">D-aminoacyl-tRNA deacylase</fullName>
        <ecNumber evidence="1">3.1.1.96</ecNumber>
    </recommendedName>
    <alternativeName>
        <fullName>D-tyrosyl-tRNA(Tyr) deacylase</fullName>
    </alternativeName>
</protein>
<reference key="1">
    <citation type="journal article" date="2016" name="Stand. Genomic Sci.">
        <title>Complete genome sequence of the Antarctic Halorubrum lacusprofundi type strain ACAM 34.</title>
        <authorList>
            <person name="Anderson I.J."/>
            <person name="DasSarma P."/>
            <person name="Lucas S."/>
            <person name="Copeland A."/>
            <person name="Lapidus A."/>
            <person name="Del Rio T.G."/>
            <person name="Tice H."/>
            <person name="Dalin E."/>
            <person name="Bruce D.C."/>
            <person name="Goodwin L."/>
            <person name="Pitluck S."/>
            <person name="Sims D."/>
            <person name="Brettin T.S."/>
            <person name="Detter J.C."/>
            <person name="Han C.S."/>
            <person name="Larimer F."/>
            <person name="Hauser L."/>
            <person name="Land M."/>
            <person name="Ivanova N."/>
            <person name="Richardson P."/>
            <person name="Cavicchioli R."/>
            <person name="DasSarma S."/>
            <person name="Woese C.R."/>
            <person name="Kyrpides N.C."/>
        </authorList>
    </citation>
    <scope>NUCLEOTIDE SEQUENCE [LARGE SCALE GENOMIC DNA]</scope>
    <source>
        <strain>ATCC 49239 / DSM 5036 / JCM 8891 / ACAM 34</strain>
    </source>
</reference>
<accession>B9LV23</accession>
<evidence type="ECO:0000255" key="1">
    <source>
        <dbReference type="HAMAP-Rule" id="MF_00562"/>
    </source>
</evidence>
<evidence type="ECO:0000256" key="2">
    <source>
        <dbReference type="SAM" id="MobiDB-lite"/>
    </source>
</evidence>